<reference key="1">
    <citation type="journal article" date="1991" name="Eur. J. Biochem.">
        <title>The lux genes of the luminous bacterial symbiont, Photobacterium leiognathi, of the ponyfish. Nucleotide sequence, difference in gene organization, and high expression in mutant Escherichia coli.</title>
        <authorList>
            <person name="Lee C.Y."/>
            <person name="Szittner R.B."/>
            <person name="Meighen E.A."/>
        </authorList>
    </citation>
    <scope>NUCLEOTIDE SEQUENCE [GENOMIC DNA]</scope>
    <source>
        <strain>ATCC 25521 / DSM 21260 / CCUG 16229 / CIP 66.5 / NCIMB 2193 / L1</strain>
    </source>
</reference>
<organism>
    <name type="scientific">Photobacterium leiognathi</name>
    <dbReference type="NCBI Taxonomy" id="553611"/>
    <lineage>
        <taxon>Bacteria</taxon>
        <taxon>Pseudomonadati</taxon>
        <taxon>Pseudomonadota</taxon>
        <taxon>Gammaproteobacteria</taxon>
        <taxon>Vibrionales</taxon>
        <taxon>Vibrionaceae</taxon>
        <taxon>Photobacterium</taxon>
    </lineage>
</organism>
<accession>P29236</accession>
<name>LUXC2_PHOLE</name>
<gene>
    <name type="primary">luxC</name>
</gene>
<keyword id="KW-0455">Luminescence</keyword>
<keyword id="KW-0521">NADP</keyword>
<keyword id="KW-0560">Oxidoreductase</keyword>
<protein>
    <recommendedName>
        <fullName evidence="2">Long-chain acyl-protein thioester reductase 2</fullName>
        <ecNumber evidence="1">1.2.1.50</ecNumber>
    </recommendedName>
    <alternativeName>
        <fullName>Acyl-CoA reductase 2</fullName>
    </alternativeName>
</protein>
<dbReference type="EC" id="1.2.1.50" evidence="1"/>
<dbReference type="EMBL" id="M63594">
    <property type="protein sequence ID" value="AAA25616.1"/>
    <property type="molecule type" value="Genomic_DNA"/>
</dbReference>
<dbReference type="PIR" id="S17836">
    <property type="entry name" value="S17836"/>
</dbReference>
<dbReference type="SMR" id="P29236"/>
<dbReference type="UniPathway" id="UPA00569"/>
<dbReference type="GO" id="GO:0003995">
    <property type="term" value="F:acyl-CoA dehydrogenase activity"/>
    <property type="evidence" value="ECO:0007669"/>
    <property type="project" value="InterPro"/>
</dbReference>
<dbReference type="GO" id="GO:0050062">
    <property type="term" value="F:long-chain-fatty-acyl-CoA reductase activity"/>
    <property type="evidence" value="ECO:0007669"/>
    <property type="project" value="UniProtKB-EC"/>
</dbReference>
<dbReference type="GO" id="GO:0008218">
    <property type="term" value="P:bioluminescence"/>
    <property type="evidence" value="ECO:0007669"/>
    <property type="project" value="UniProtKB-KW"/>
</dbReference>
<dbReference type="CDD" id="cd07080">
    <property type="entry name" value="ALDH_Acyl-CoA-Red_LuxC"/>
    <property type="match status" value="1"/>
</dbReference>
<dbReference type="Gene3D" id="3.40.605.10">
    <property type="entry name" value="Aldehyde Dehydrogenase, Chain A, domain 1"/>
    <property type="match status" value="1"/>
</dbReference>
<dbReference type="Gene3D" id="3.40.309.10">
    <property type="entry name" value="Aldehyde Dehydrogenase, Chain A, domain 2"/>
    <property type="match status" value="1"/>
</dbReference>
<dbReference type="InterPro" id="IPR016161">
    <property type="entry name" value="Ald_DH/histidinol_DH"/>
</dbReference>
<dbReference type="InterPro" id="IPR016163">
    <property type="entry name" value="Ald_DH_C"/>
</dbReference>
<dbReference type="InterPro" id="IPR016162">
    <property type="entry name" value="Ald_DH_N"/>
</dbReference>
<dbReference type="InterPro" id="IPR008670">
    <property type="entry name" value="CoA_reduct_LuxC"/>
</dbReference>
<dbReference type="Pfam" id="PF05893">
    <property type="entry name" value="LuxC"/>
    <property type="match status" value="1"/>
</dbReference>
<dbReference type="PIRSF" id="PIRSF009414">
    <property type="entry name" value="LuxC"/>
    <property type="match status" value="1"/>
</dbReference>
<dbReference type="SUPFAM" id="SSF53720">
    <property type="entry name" value="ALDH-like"/>
    <property type="match status" value="1"/>
</dbReference>
<sequence>MIKKIPMIIGGVVQNTSGYGMRELTLNNNKVNIPIITQSDVEAIQSLNIENKLTINQIVNFLYTVGQKWKSETYSRRLTYIRDLIKFLGYSQEMAKLEANWISMILCSKSALYDIVENDLSSRHIIDEWIPQGECYVKALPKGKSVHLLAGNVPLSGVTSILRAILTKNECIIKTSSADPFTATALVNSFIDVDAEHPITRSISVMYWSHSEDLAIPKQIMSCADVVIAWGGDDAIKWATEHAPSHADILKFGPKKSISIVDNPTDIKAAAIGVAHDICFYDQQACFSTQDIYYIGDSIDIFFDELAQQLNKYKDILPKGERNFDEKAAFSLTERECLFAKYKVQKGESQSWLLTQSPAGSFGNQPLSRSAYIHQVNDISEVIPFVHKAVTQTVAIAPWESSFKYRDILAEHGAERIIEAGMNNIFRVGGAHDGMRPLQRLVNYISHERPSTYTTKDVSVKIEQTRYLEEDKFLVFVP</sequence>
<feature type="chain" id="PRO_0000220197" description="Long-chain acyl-protein thioester reductase 2">
    <location>
        <begin position="1"/>
        <end position="478"/>
    </location>
</feature>
<evidence type="ECO:0000250" key="1">
    <source>
        <dbReference type="UniProtKB" id="P19841"/>
    </source>
</evidence>
<evidence type="ECO:0000305" key="2"/>
<proteinExistence type="inferred from homology"/>
<comment type="function">
    <text evidence="1">LuxC is the fatty acid reductase enzyme responsible for synthesis of the aldehyde substrate for the luminescent reaction catalyzed by luciferase.</text>
</comment>
<comment type="catalytic activity">
    <reaction evidence="1">
        <text>a long-chain fatty aldehyde + NADP(+) + CoA = a long-chain fatty acyl-CoA + NADPH + H(+)</text>
        <dbReference type="Rhea" id="RHEA:15437"/>
        <dbReference type="ChEBI" id="CHEBI:15378"/>
        <dbReference type="ChEBI" id="CHEBI:17176"/>
        <dbReference type="ChEBI" id="CHEBI:57287"/>
        <dbReference type="ChEBI" id="CHEBI:57783"/>
        <dbReference type="ChEBI" id="CHEBI:58349"/>
        <dbReference type="ChEBI" id="CHEBI:83139"/>
        <dbReference type="EC" id="1.2.1.50"/>
    </reaction>
</comment>
<comment type="pathway">
    <text>Lipid metabolism; fatty acid reduction for biolumincescence.</text>
</comment>
<comment type="similarity">
    <text evidence="2">Belongs to the LuxC family.</text>
</comment>